<sequence length="450" mass="48356">MVKPFEPEFQQALDELTTSLQPFLDANPQYKKALEIVQVPERVLQFRVVWEDDQGVAQVNHGFRVQYNSALGPYKGGLRLHPSVNLSILKFLGFEQTFKNALTGLSMGGGKGGSDFDPKGKSDSEIRRFCFSFMGELFRHIGSDTDVPAGDIGTGGREIGFLFGAYKKLRNEFTGMLTGKGLTWGGSFIRPEATGYGLIYFVEHMIAKACPEYSLDKPSTLVAISGSGNVAQFTALKVIELGATVLSLSDSKGSLISDKGYTKEFIRKVADLKLKGGSLASLANEEGYTYHAGARPWTLIPTIHIALPGATQNEVSAEEAEALLKAGVRIVAEGSNMGCTADAIDIFESSRKAGPGGVWYAPGKASNCGGVAVSGLEMAQNSQRLAWTTQEVDSKLKDIMAECYGICLTAGTKWSGEELTDEVLPSLLSGANVAGFIKVADAMKAQGDWW</sequence>
<evidence type="ECO:0000250" key="1"/>
<evidence type="ECO:0000255" key="2">
    <source>
        <dbReference type="PROSITE-ProRule" id="PRU10011"/>
    </source>
</evidence>
<evidence type="ECO:0000305" key="3"/>
<feature type="chain" id="PRO_0000182788" description="NADP-specific glutamate dehydrogenase">
    <location>
        <begin position="1"/>
        <end position="450"/>
    </location>
</feature>
<feature type="active site" evidence="2">
    <location>
        <position position="111"/>
    </location>
</feature>
<accession>Q96UJ9</accession>
<reference key="1">
    <citation type="submission" date="2001-08" db="EMBL/GenBank/DDBJ databases">
        <title>Nucleotide sequence and expression of NADP(+)-GDH and GS from the ectomycorrhizal fungus Hebeloma cylindrosporum.</title>
        <authorList>
            <person name="Rodriguez-Pastrana B."/>
            <person name="Javelle A."/>
            <person name="Belleville R."/>
            <person name="Morel M."/>
            <person name="Botton B."/>
            <person name="Jacob C."/>
            <person name="Chalot M."/>
            <person name="Brun A."/>
        </authorList>
    </citation>
    <scope>NUCLEOTIDE SEQUENCE [MRNA]</scope>
    <source>
        <strain>h1</strain>
    </source>
</reference>
<dbReference type="EC" id="1.4.1.4"/>
<dbReference type="EMBL" id="AY052476">
    <property type="protein sequence ID" value="AAL06075.1"/>
    <property type="molecule type" value="mRNA"/>
</dbReference>
<dbReference type="SMR" id="Q96UJ9"/>
<dbReference type="BRENDA" id="1.4.1.4">
    <property type="organism ID" value="7425"/>
</dbReference>
<dbReference type="GO" id="GO:0005829">
    <property type="term" value="C:cytosol"/>
    <property type="evidence" value="ECO:0007669"/>
    <property type="project" value="TreeGrafter"/>
</dbReference>
<dbReference type="GO" id="GO:0004354">
    <property type="term" value="F:glutamate dehydrogenase (NADP+) activity"/>
    <property type="evidence" value="ECO:0007669"/>
    <property type="project" value="UniProtKB-EC"/>
</dbReference>
<dbReference type="GO" id="GO:0006537">
    <property type="term" value="P:glutamate biosynthetic process"/>
    <property type="evidence" value="ECO:0007669"/>
    <property type="project" value="TreeGrafter"/>
</dbReference>
<dbReference type="CDD" id="cd05313">
    <property type="entry name" value="NAD_bind_2_Glu_DH"/>
    <property type="match status" value="1"/>
</dbReference>
<dbReference type="FunFam" id="1.10.285.10:FF:000001">
    <property type="entry name" value="Glutamate dehydrogenase"/>
    <property type="match status" value="1"/>
</dbReference>
<dbReference type="FunFam" id="3.40.50.10860:FF:000002">
    <property type="entry name" value="Glutamate dehydrogenase"/>
    <property type="match status" value="1"/>
</dbReference>
<dbReference type="FunFam" id="3.40.50.720:FF:000030">
    <property type="entry name" value="Glutamate dehydrogenase"/>
    <property type="match status" value="1"/>
</dbReference>
<dbReference type="Gene3D" id="1.10.285.10">
    <property type="entry name" value="Glutamate Dehydrogenase, chain A, domain 3"/>
    <property type="match status" value="2"/>
</dbReference>
<dbReference type="Gene3D" id="3.40.50.10860">
    <property type="entry name" value="Leucine Dehydrogenase, chain A, domain 1"/>
    <property type="match status" value="1"/>
</dbReference>
<dbReference type="Gene3D" id="3.40.50.720">
    <property type="entry name" value="NAD(P)-binding Rossmann-like Domain"/>
    <property type="match status" value="1"/>
</dbReference>
<dbReference type="InterPro" id="IPR046346">
    <property type="entry name" value="Aminoacid_DH-like_N_sf"/>
</dbReference>
<dbReference type="InterPro" id="IPR006095">
    <property type="entry name" value="Glu/Leu/Phe/Val/Trp_DH"/>
</dbReference>
<dbReference type="InterPro" id="IPR006096">
    <property type="entry name" value="Glu/Leu/Phe/Val/Trp_DH_C"/>
</dbReference>
<dbReference type="InterPro" id="IPR006097">
    <property type="entry name" value="Glu/Leu/Phe/Val/Trp_DH_dimer"/>
</dbReference>
<dbReference type="InterPro" id="IPR033524">
    <property type="entry name" value="Glu/Leu/Phe/Val_DH_AS"/>
</dbReference>
<dbReference type="InterPro" id="IPR014362">
    <property type="entry name" value="Glu_DH"/>
</dbReference>
<dbReference type="InterPro" id="IPR050724">
    <property type="entry name" value="Glu_Leu_Phe_Val_DH"/>
</dbReference>
<dbReference type="InterPro" id="IPR036291">
    <property type="entry name" value="NAD(P)-bd_dom_sf"/>
</dbReference>
<dbReference type="InterPro" id="IPR033922">
    <property type="entry name" value="NAD_bind_Glu_DH"/>
</dbReference>
<dbReference type="NCBIfam" id="NF006929">
    <property type="entry name" value="PRK09414.1"/>
    <property type="match status" value="1"/>
</dbReference>
<dbReference type="PANTHER" id="PTHR43571">
    <property type="entry name" value="NADP-SPECIFIC GLUTAMATE DEHYDROGENASE 1-RELATED"/>
    <property type="match status" value="1"/>
</dbReference>
<dbReference type="PANTHER" id="PTHR43571:SF1">
    <property type="entry name" value="NADP-SPECIFIC GLUTAMATE DEHYDROGENASE 1-RELATED"/>
    <property type="match status" value="1"/>
</dbReference>
<dbReference type="Pfam" id="PF00208">
    <property type="entry name" value="ELFV_dehydrog"/>
    <property type="match status" value="1"/>
</dbReference>
<dbReference type="Pfam" id="PF02812">
    <property type="entry name" value="ELFV_dehydrog_N"/>
    <property type="match status" value="1"/>
</dbReference>
<dbReference type="PIRSF" id="PIRSF000185">
    <property type="entry name" value="Glu_DH"/>
    <property type="match status" value="1"/>
</dbReference>
<dbReference type="PRINTS" id="PR00082">
    <property type="entry name" value="GLFDHDRGNASE"/>
</dbReference>
<dbReference type="SMART" id="SM00839">
    <property type="entry name" value="ELFV_dehydrog"/>
    <property type="match status" value="1"/>
</dbReference>
<dbReference type="SUPFAM" id="SSF53223">
    <property type="entry name" value="Aminoacid dehydrogenase-like, N-terminal domain"/>
    <property type="match status" value="1"/>
</dbReference>
<dbReference type="SUPFAM" id="SSF51735">
    <property type="entry name" value="NAD(P)-binding Rossmann-fold domains"/>
    <property type="match status" value="1"/>
</dbReference>
<dbReference type="PROSITE" id="PS00074">
    <property type="entry name" value="GLFV_DEHYDROGENASE"/>
    <property type="match status" value="1"/>
</dbReference>
<keyword id="KW-0521">NADP</keyword>
<keyword id="KW-0560">Oxidoreductase</keyword>
<organism>
    <name type="scientific">Hebeloma cylindrosporum</name>
    <dbReference type="NCBI Taxonomy" id="76867"/>
    <lineage>
        <taxon>Eukaryota</taxon>
        <taxon>Fungi</taxon>
        <taxon>Dikarya</taxon>
        <taxon>Basidiomycota</taxon>
        <taxon>Agaricomycotina</taxon>
        <taxon>Agaricomycetes</taxon>
        <taxon>Agaricomycetidae</taxon>
        <taxon>Agaricales</taxon>
        <taxon>Agaricineae</taxon>
        <taxon>Hymenogastraceae</taxon>
        <taxon>Hebeloma</taxon>
    </lineage>
</organism>
<comment type="catalytic activity">
    <reaction>
        <text>L-glutamate + NADP(+) + H2O = 2-oxoglutarate + NH4(+) + NADPH + H(+)</text>
        <dbReference type="Rhea" id="RHEA:11612"/>
        <dbReference type="ChEBI" id="CHEBI:15377"/>
        <dbReference type="ChEBI" id="CHEBI:15378"/>
        <dbReference type="ChEBI" id="CHEBI:16810"/>
        <dbReference type="ChEBI" id="CHEBI:28938"/>
        <dbReference type="ChEBI" id="CHEBI:29985"/>
        <dbReference type="ChEBI" id="CHEBI:57783"/>
        <dbReference type="ChEBI" id="CHEBI:58349"/>
        <dbReference type="EC" id="1.4.1.4"/>
    </reaction>
</comment>
<comment type="subunit">
    <text evidence="1">Homohexamer.</text>
</comment>
<comment type="similarity">
    <text evidence="3">Belongs to the Glu/Leu/Phe/Val dehydrogenases family.</text>
</comment>
<name>DHE4_HEBCY</name>
<proteinExistence type="evidence at transcript level"/>
<protein>
    <recommendedName>
        <fullName>NADP-specific glutamate dehydrogenase</fullName>
        <shortName>NADP-GDH</shortName>
        <ecNumber>1.4.1.4</ecNumber>
    </recommendedName>
    <alternativeName>
        <fullName>NADP-dependent glutamate dehydrogenase</fullName>
    </alternativeName>
</protein>